<protein>
    <recommendedName>
        <fullName evidence="1">Nucleoprotein</fullName>
        <ecNumber evidence="1">3.1.13.-</ecNumber>
    </recommendedName>
    <alternativeName>
        <fullName evidence="1">Nucleocapsid protein</fullName>
    </alternativeName>
    <alternativeName>
        <fullName evidence="1">Protein N</fullName>
    </alternativeName>
</protein>
<reference key="1">
    <citation type="journal article" date="1987" name="Virology">
        <title>Molecular characterization of the genomic S RNA segment from lymphocytic choriomeningitis virus.</title>
        <authorList>
            <person name="Southern P.J."/>
            <person name="Singh M.K."/>
            <person name="Riviere Y."/>
            <person name="Jacoby D.R."/>
            <person name="Buchmeier M.J."/>
            <person name="Oldstone M.B.A."/>
        </authorList>
    </citation>
    <scope>NUCLEOTIDE SEQUENCE [GENOMIC RNA]</scope>
</reference>
<reference key="2">
    <citation type="journal article" date="1988" name="Virology">
        <title>Virus-lymphocyte interactions. IV. Molecular characterization of LCMV Armstrong (CTL+) small genomic segment and that of its variant, Clone 13 (CTL-).</title>
        <authorList>
            <person name="Salvato M."/>
            <person name="Shimomaye E."/>
            <person name="Southern P.J."/>
            <person name="Oldstone M.B.A."/>
        </authorList>
    </citation>
    <scope>NUCLEOTIDE SEQUENCE [GENOMIC RNA]</scope>
</reference>
<reference key="3">
    <citation type="journal article" date="2005" name="J. Virol.">
        <title>Mutagenesis-induced, large fitness variations with an invariant arenavirus consensus genomic nucleotide sequence.</title>
        <authorList>
            <person name="Grande-Perez A."/>
            <person name="Gomez-Mariano G."/>
            <person name="Lowenstein P.R."/>
            <person name="Domingo E."/>
        </authorList>
    </citation>
    <scope>NUCLEOTIDE SEQUENCE [GENOMIC RNA]</scope>
    <source>
        <strain>Isolate Armstrong 53b</strain>
    </source>
</reference>
<reference key="4">
    <citation type="journal article" date="2006" name="Proc. Natl. Acad. Sci. U.S.A.">
        <title>Recovery of an arenavirus entirely from RNA polymerase I/II-driven cDNA.</title>
        <authorList>
            <person name="Flatz L."/>
            <person name="Bergthaler A."/>
            <person name="de la Torre J.C."/>
            <person name="Pinschewer D.D."/>
        </authorList>
    </citation>
    <scope>NUCLEOTIDE SEQUENCE [GENOMIC RNA]</scope>
    <source>
        <strain>Isolate Armstrong-derived variant Cl13</strain>
    </source>
</reference>
<reference key="5">
    <citation type="journal article" date="1983" name="J. Gen. Virol.">
        <title>Lymphocytic choriomeningitis virus. V. Proposed structural arrangement of proteins in the virion.</title>
        <authorList>
            <person name="Bruns M."/>
            <person name="Lehmann-Grube F."/>
        </authorList>
    </citation>
    <scope>HOMOMULTIMERIZATION</scope>
</reference>
<reference key="6">
    <citation type="journal article" date="1986" name="Virology">
        <title>Lymphocytic choriomeningitis virus. IX. Properties of the nucleocapsid.</title>
        <authorList>
            <person name="Bruns M."/>
            <person name="Zeller W."/>
            <person name="Rohdewohld H."/>
            <person name="Lehmann-Grube F."/>
        </authorList>
    </citation>
    <scope>RNA-BINDING</scope>
    <scope>SUBCELLULAR LOCATION</scope>
</reference>
<reference key="7">
    <citation type="journal article" date="1991" name="Virology">
        <title>Protein-protein interactions in lymphocytic choriomeningitis virus.</title>
        <authorList>
            <person name="Burns J.W."/>
            <person name="Buchmeier M.J."/>
        </authorList>
    </citation>
    <scope>INTERACTION WITH GLYCOPROTEIN G2</scope>
</reference>
<reference key="8">
    <citation type="journal article" date="2003" name="J. Virol.">
        <title>Role of the virus nucleoprotein in the regulation of lymphocytic choriomeningitis virus transcription and RNA replication.</title>
        <authorList>
            <person name="Pinschewer D.D."/>
            <person name="Perez M."/>
            <person name="de la Torre J.C."/>
        </authorList>
    </citation>
    <scope>FUNCTION</scope>
</reference>
<reference key="9">
    <citation type="journal article" date="2007" name="J. Virol.">
        <title>Differential inhibition of type I interferon induction by arenavirus nucleoproteins.</title>
        <authorList>
            <person name="Martinez-Sobrido L."/>
            <person name="Giannakas P."/>
            <person name="Cubitt B."/>
            <person name="Garcia-Sastre A."/>
            <person name="de la Torre J.C."/>
        </authorList>
    </citation>
    <scope>FUNCTION</scope>
</reference>
<reference key="10">
    <citation type="journal article" date="2012" name="J. Virol.">
        <title>Arenavirus nucleoprotein targets interferon regulatory factor-activating kinase IKKepsilon.</title>
        <authorList>
            <person name="Pythoud C."/>
            <person name="Rodrigo W.W."/>
            <person name="Pasqual G."/>
            <person name="Rothenberger S."/>
            <person name="Martinez-Sobrido L."/>
            <person name="de la Torre J.C."/>
            <person name="Kunz S."/>
        </authorList>
    </citation>
    <scope>FUNCTION</scope>
    <scope>INTERACTION WITH HOST IKBKE</scope>
    <scope>MUTAGENESIS OF ASP-382; GLU-384; ASP-459; HIS-517 AND ASP-522</scope>
</reference>
<reference key="11">
    <citation type="journal article" date="2014" name="Acta Crystallogr. D">
        <title>Structure of the LCMV nucleoprotein provides a template for understanding arenavirus replication and immunosuppression.</title>
        <authorList>
            <person name="West B.R."/>
            <person name="Hastie K.M."/>
            <person name="Saphire E.O."/>
        </authorList>
    </citation>
    <scope>X-RAY CRYSTALLOGRAPHY (2.00 ANGSTROMS) OF 341-558</scope>
</reference>
<feature type="chain" id="PRO_0000079193" description="Nucleoprotein">
    <location>
        <begin position="1"/>
        <end position="558"/>
    </location>
</feature>
<feature type="region of interest" description="Binding site for the cap structure m7GTP" evidence="1">
    <location>
        <begin position="54"/>
        <end position="237"/>
    </location>
</feature>
<feature type="binding site" evidence="6">
    <location>
        <position position="382"/>
    </location>
    <ligand>
        <name>Mg(2+)</name>
        <dbReference type="ChEBI" id="CHEBI:18420"/>
    </ligand>
</feature>
<feature type="binding site" evidence="1">
    <location>
        <position position="382"/>
    </location>
    <ligand>
        <name>Mn(2+)</name>
        <dbReference type="ChEBI" id="CHEBI:29035"/>
    </ligand>
</feature>
<feature type="binding site" evidence="6">
    <location>
        <position position="384"/>
    </location>
    <ligand>
        <name>Mg(2+)</name>
        <dbReference type="ChEBI" id="CHEBI:18420"/>
    </ligand>
</feature>
<feature type="binding site" evidence="1">
    <location>
        <position position="384"/>
    </location>
    <ligand>
        <name>Mn(2+)</name>
        <dbReference type="ChEBI" id="CHEBI:29035"/>
    </ligand>
</feature>
<feature type="binding site" evidence="1 6">
    <location>
        <position position="392"/>
    </location>
    <ligand>
        <name>Zn(2+)</name>
        <dbReference type="ChEBI" id="CHEBI:29105"/>
    </ligand>
</feature>
<feature type="binding site" evidence="1 6">
    <location>
        <position position="499"/>
    </location>
    <ligand>
        <name>Zn(2+)</name>
        <dbReference type="ChEBI" id="CHEBI:29105"/>
    </ligand>
</feature>
<feature type="binding site" evidence="1 6">
    <location>
        <position position="502"/>
    </location>
    <ligand>
        <name>Zn(2+)</name>
        <dbReference type="ChEBI" id="CHEBI:29105"/>
    </ligand>
</feature>
<feature type="binding site" evidence="1 6">
    <location>
        <position position="518"/>
    </location>
    <ligand>
        <name>Zn(2+)</name>
        <dbReference type="ChEBI" id="CHEBI:29105"/>
    </ligand>
</feature>
<feature type="binding site" evidence="6">
    <location>
        <position position="522"/>
    </location>
    <ligand>
        <name>Mg(2+)</name>
        <dbReference type="ChEBI" id="CHEBI:18420"/>
    </ligand>
</feature>
<feature type="binding site" evidence="1">
    <location>
        <position position="522"/>
    </location>
    <ligand>
        <name>Mn(2+)</name>
        <dbReference type="ChEBI" id="CHEBI:29035"/>
    </ligand>
</feature>
<feature type="site" description="Important for exonuclease activity" evidence="1">
    <location>
        <position position="459"/>
    </location>
</feature>
<feature type="mutagenesis site" description="Decreases interaction with host IKBKE, defective to inhibit IKBKE kinase activity and IRF3 activation." evidence="5">
    <original>D</original>
    <variation>A</variation>
    <location>
        <position position="382"/>
    </location>
</feature>
<feature type="mutagenesis site" description="Decreases interaction with host IKBKE, defective to inhibit IKBKE kinase activity and IRF3 activation." evidence="5">
    <original>E</original>
    <variation>A</variation>
    <location>
        <position position="384"/>
    </location>
</feature>
<feature type="mutagenesis site" description="Decreases interaction with host IKBKE, defective to inhibit IKBKE kinase activity and IRF3 activation." evidence="5">
    <original>D</original>
    <variation>A</variation>
    <location>
        <position position="459"/>
    </location>
</feature>
<feature type="mutagenesis site" description="Decreases interaction with host IKBKE, defective to inhibit IKBKE kinase activity and IRF3 activation." evidence="5">
    <original>H</original>
    <variation>A</variation>
    <location>
        <position position="517"/>
    </location>
</feature>
<feature type="mutagenesis site" description="Decreases interaction with host IKBKE, defective to inhibit IKBKE kinase activity and IRF3 activation." evidence="5">
    <original>D</original>
    <variation>A</variation>
    <location>
        <position position="522"/>
    </location>
</feature>
<feature type="helix" evidence="9">
    <location>
        <begin position="360"/>
        <end position="369"/>
    </location>
</feature>
<feature type="helix" evidence="9">
    <location>
        <begin position="370"/>
        <end position="372"/>
    </location>
</feature>
<feature type="strand" evidence="8">
    <location>
        <begin position="375"/>
        <end position="377"/>
    </location>
</feature>
<feature type="strand" evidence="9">
    <location>
        <begin position="380"/>
        <end position="386"/>
    </location>
</feature>
<feature type="strand" evidence="9">
    <location>
        <begin position="389"/>
        <end position="396"/>
    </location>
</feature>
<feature type="turn" evidence="9">
    <location>
        <begin position="398"/>
        <end position="400"/>
    </location>
</feature>
<feature type="strand" evidence="9">
    <location>
        <begin position="402"/>
        <end position="407"/>
    </location>
</feature>
<feature type="helix" evidence="9">
    <location>
        <begin position="413"/>
        <end position="422"/>
    </location>
</feature>
<feature type="helix" evidence="9">
    <location>
        <begin position="428"/>
        <end position="431"/>
    </location>
</feature>
<feature type="helix" evidence="9">
    <location>
        <begin position="438"/>
        <end position="445"/>
    </location>
</feature>
<feature type="strand" evidence="9">
    <location>
        <begin position="451"/>
        <end position="455"/>
    </location>
</feature>
<feature type="helix" evidence="9">
    <location>
        <begin position="457"/>
        <end position="466"/>
    </location>
</feature>
<feature type="strand" evidence="9">
    <location>
        <begin position="472"/>
        <end position="476"/>
    </location>
</feature>
<feature type="helix" evidence="9">
    <location>
        <begin position="481"/>
        <end position="484"/>
    </location>
</feature>
<feature type="turn" evidence="9">
    <location>
        <begin position="485"/>
        <end position="487"/>
    </location>
</feature>
<feature type="helix" evidence="9">
    <location>
        <begin position="488"/>
        <end position="495"/>
    </location>
</feature>
<feature type="helix" evidence="9">
    <location>
        <begin position="496"/>
        <end position="498"/>
    </location>
</feature>
<feature type="strand" evidence="9">
    <location>
        <begin position="509"/>
        <end position="511"/>
    </location>
</feature>
<feature type="helix" evidence="9">
    <location>
        <begin position="519"/>
        <end position="531"/>
    </location>
</feature>
<feature type="strand" evidence="9">
    <location>
        <begin position="541"/>
        <end position="544"/>
    </location>
</feature>
<feature type="helix" evidence="9">
    <location>
        <begin position="546"/>
        <end position="549"/>
    </location>
</feature>
<dbReference type="EC" id="3.1.13.-" evidence="1"/>
<dbReference type="EMBL" id="M20869">
    <property type="protein sequence ID" value="AAA46257.1"/>
    <property type="molecule type" value="Genomic_RNA"/>
</dbReference>
<dbReference type="EMBL" id="AY847350">
    <property type="protein sequence ID" value="AAX49342.1"/>
    <property type="molecule type" value="Genomic_RNA"/>
</dbReference>
<dbReference type="EMBL" id="DQ361065">
    <property type="protein sequence ID" value="ABC96002.1"/>
    <property type="molecule type" value="Genomic_RNA"/>
</dbReference>
<dbReference type="PIR" id="A26345">
    <property type="entry name" value="VHXPLM"/>
</dbReference>
<dbReference type="RefSeq" id="NP_694852.1">
    <property type="nucleotide sequence ID" value="NC_004294.1"/>
</dbReference>
<dbReference type="PDB" id="4O6H">
    <property type="method" value="X-ray"/>
    <property type="resolution" value="2.80 A"/>
    <property type="chains" value="A/B/C/D/E/F/G/H=341-558"/>
</dbReference>
<dbReference type="PDB" id="4O6I">
    <property type="method" value="X-ray"/>
    <property type="resolution" value="2.00 A"/>
    <property type="chains" value="A/B=341-558"/>
</dbReference>
<dbReference type="PDB" id="8CNL">
    <property type="method" value="X-ray"/>
    <property type="resolution" value="2.80 A"/>
    <property type="chains" value="A/B/C/D/E/F/G/H=341-558"/>
</dbReference>
<dbReference type="PDBsum" id="4O6H"/>
<dbReference type="PDBsum" id="4O6I"/>
<dbReference type="PDBsum" id="8CNL"/>
<dbReference type="SMR" id="P09992"/>
<dbReference type="IntAct" id="P09992">
    <property type="interactions" value="12"/>
</dbReference>
<dbReference type="MINT" id="P09992"/>
<dbReference type="KEGG" id="vg:956592"/>
<dbReference type="EvolutionaryTrace" id="P09992"/>
<dbReference type="Proteomes" id="UP000002474">
    <property type="component" value="Genome"/>
</dbReference>
<dbReference type="Proteomes" id="UP000121528">
    <property type="component" value="Genome"/>
</dbReference>
<dbReference type="Proteomes" id="UP000204492">
    <property type="component" value="Genome"/>
</dbReference>
<dbReference type="GO" id="GO:0019029">
    <property type="term" value="C:helical viral capsid"/>
    <property type="evidence" value="ECO:0007669"/>
    <property type="project" value="UniProtKB-UniRule"/>
</dbReference>
<dbReference type="GO" id="GO:0030430">
    <property type="term" value="C:host cell cytoplasm"/>
    <property type="evidence" value="ECO:0007669"/>
    <property type="project" value="UniProtKB-SubCell"/>
</dbReference>
<dbReference type="GO" id="GO:1990904">
    <property type="term" value="C:ribonucleoprotein complex"/>
    <property type="evidence" value="ECO:0007669"/>
    <property type="project" value="UniProtKB-KW"/>
</dbReference>
<dbReference type="GO" id="GO:0019013">
    <property type="term" value="C:viral nucleocapsid"/>
    <property type="evidence" value="ECO:0007669"/>
    <property type="project" value="UniProtKB-UniRule"/>
</dbReference>
<dbReference type="GO" id="GO:0016787">
    <property type="term" value="F:hydrolase activity"/>
    <property type="evidence" value="ECO:0007669"/>
    <property type="project" value="UniProtKB-KW"/>
</dbReference>
<dbReference type="GO" id="GO:0046872">
    <property type="term" value="F:metal ion binding"/>
    <property type="evidence" value="ECO:0007669"/>
    <property type="project" value="UniProtKB-UniRule"/>
</dbReference>
<dbReference type="GO" id="GO:0003723">
    <property type="term" value="F:RNA binding"/>
    <property type="evidence" value="ECO:0007669"/>
    <property type="project" value="UniProtKB-UniRule"/>
</dbReference>
<dbReference type="GO" id="GO:0039689">
    <property type="term" value="P:negative stranded viral RNA replication"/>
    <property type="evidence" value="ECO:0000314"/>
    <property type="project" value="UniProtKB"/>
</dbReference>
<dbReference type="GO" id="GO:0039696">
    <property type="term" value="P:RNA-templated viral transcription"/>
    <property type="evidence" value="ECO:0000314"/>
    <property type="project" value="UniProtKB"/>
</dbReference>
<dbReference type="GO" id="GO:0039724">
    <property type="term" value="P:symbiont-mediated suppression of host cytoplasmic pattern recognition receptor signaling pathway via inhibition of IKBKE activity"/>
    <property type="evidence" value="ECO:0007669"/>
    <property type="project" value="UniProtKB-UniRule"/>
</dbReference>
<dbReference type="GO" id="GO:0085034">
    <property type="term" value="P:symbiont-mediated suppression of host NF-kappaB cascade"/>
    <property type="evidence" value="ECO:0000269"/>
    <property type="project" value="SigSci"/>
</dbReference>
<dbReference type="FunFam" id="1.10.150.550:FF:000001">
    <property type="entry name" value="Nucleoprotein"/>
    <property type="match status" value="1"/>
</dbReference>
<dbReference type="FunFam" id="1.10.150.550:FF:000002">
    <property type="entry name" value="Nucleoprotein"/>
    <property type="match status" value="1"/>
</dbReference>
<dbReference type="FunFam" id="1.10.150.550:FF:000003">
    <property type="entry name" value="Nucleoprotein"/>
    <property type="match status" value="1"/>
</dbReference>
<dbReference type="FunFam" id="3.30.420.410:FF:000001">
    <property type="entry name" value="Nucleoprotein"/>
    <property type="match status" value="1"/>
</dbReference>
<dbReference type="Gene3D" id="3.30.420.410">
    <property type="entry name" value="Arenaviral nucleoprotein, C-terminal domain"/>
    <property type="match status" value="1"/>
</dbReference>
<dbReference type="Gene3D" id="1.10.150.550">
    <property type="entry name" value="Arenavirus nucleocapsid protein, head domain"/>
    <property type="match status" value="3"/>
</dbReference>
<dbReference type="HAMAP" id="MF_04085">
    <property type="entry name" value="ARENA_NCAP"/>
    <property type="match status" value="1"/>
</dbReference>
<dbReference type="InterPro" id="IPR000229">
    <property type="entry name" value="Nucleocapsid_arenaviridae"/>
</dbReference>
<dbReference type="InterPro" id="IPR035084">
    <property type="entry name" value="Nucleocapsid_C_arenaviridae"/>
</dbReference>
<dbReference type="InterPro" id="IPR038115">
    <property type="entry name" value="Nucleocapsid_C_sf"/>
</dbReference>
<dbReference type="InterPro" id="IPR035083">
    <property type="entry name" value="Nucleocapsid_N_arenaviridae"/>
</dbReference>
<dbReference type="Pfam" id="PF17290">
    <property type="entry name" value="Arena_ncap_C"/>
    <property type="match status" value="1"/>
</dbReference>
<dbReference type="Pfam" id="PF00843">
    <property type="entry name" value="Arena_nucleocap"/>
    <property type="match status" value="1"/>
</dbReference>
<dbReference type="PIRSF" id="PIRSF004029">
    <property type="entry name" value="N_ArenaV"/>
    <property type="match status" value="1"/>
</dbReference>
<keyword id="KW-0002">3D-structure</keyword>
<keyword id="KW-0167">Capsid protein</keyword>
<keyword id="KW-1139">Helical capsid protein</keyword>
<keyword id="KW-1035">Host cytoplasm</keyword>
<keyword id="KW-0945">Host-virus interaction</keyword>
<keyword id="KW-0378">Hydrolase</keyword>
<keyword id="KW-1224">Inhibition of host IKBKE by virus</keyword>
<keyword id="KW-1090">Inhibition of host innate immune response by virus</keyword>
<keyword id="KW-1113">Inhibition of host RLR pathway by virus</keyword>
<keyword id="KW-0922">Interferon antiviral system evasion</keyword>
<keyword id="KW-0464">Manganese</keyword>
<keyword id="KW-0479">Metal-binding</keyword>
<keyword id="KW-1185">Reference proteome</keyword>
<keyword id="KW-0687">Ribonucleoprotein</keyword>
<keyword id="KW-0694">RNA-binding</keyword>
<keyword id="KW-0899">Viral immunoevasion</keyword>
<keyword id="KW-0543">Viral nucleoprotein</keyword>
<keyword id="KW-0946">Virion</keyword>
<keyword id="KW-0862">Zinc</keyword>
<organism>
    <name type="scientific">Lymphocytic choriomeningitis virus (strain Armstrong)</name>
    <name type="common">LCMV</name>
    <dbReference type="NCBI Taxonomy" id="11624"/>
    <lineage>
        <taxon>Viruses</taxon>
        <taxon>Riboviria</taxon>
        <taxon>Orthornavirae</taxon>
        <taxon>Negarnaviricota</taxon>
        <taxon>Polyploviricotina</taxon>
        <taxon>Ellioviricetes</taxon>
        <taxon>Bunyavirales</taxon>
        <taxon>Arenaviridae</taxon>
        <taxon>Mammarenavirus</taxon>
        <taxon>Mammarenavirus choriomeningitidis</taxon>
    </lineage>
</organism>
<accession>P09992</accession>
<accession>Q49K86</accession>
<comment type="function">
    <text evidence="1 2 3 5">Encapsidates the genome, protecting it from nucleases. The encapsidated genomic RNA is termed the nucleocapsid (NC). Serves as template for viral transcription and replication. The increased presence of protein N in host cell does not seem to trigger the switch from transcription to replication as observed in other negative strain RNA viruses. Through the interaction with host IKBKE, strongly inhibits the phosphorylation and nuclear translocation of host IRF3, a protein involved in interferon activation pathway, leading to the inhibition of interferon-beta and IRF3-dependent promoters activation. Also encodes a functional 3'-5' exoribonuclease that degrades preferentially dsRNA substrates and thereby participates in the suppression of interferon induction.</text>
</comment>
<comment type="subunit">
    <text evidence="1 4 5">Homomultimerizes to form the nucleocapsid. Binds to viral genomic RNA. Interacts with glycoprotein G2. Interacts with protein Z; this interaction probably directs the encapsidated genome to budding sites. Interacts with protein L; this interaction does not interfere with Z-L interaction. Interacts with host IKBKE (via Protein kinase domain); the interaction inhibits IKBKE kinase activity (PubMed:22532683).</text>
</comment>
<comment type="interaction">
    <interactant intactId="EBI-6149284">
        <id>P09992</id>
    </interactant>
    <interactant intactId="EBI-26968662">
        <id>P14240</id>
        <label>L</label>
    </interactant>
    <organismsDiffer>false</organismsDiffer>
    <experiments>2</experiments>
</comment>
<comment type="subcellular location">
    <subcellularLocation>
        <location evidence="1 7">Virion</location>
    </subcellularLocation>
    <subcellularLocation>
        <location evidence="1 7">Host cytoplasm</location>
    </subcellularLocation>
</comment>
<comment type="domain">
    <text evidence="1">The N-terminal region is important for the cap-binding activity while the C-terminal region contains the 3'-5' exoribonuclease activity. A CCHE zinc binding site is present in the C-terminal region and may thus contribute to the substrate binding and/or the specificity of the exonuclease activity.</text>
</comment>
<comment type="similarity">
    <text evidence="1">Belongs to the arenaviridae nucleocapsid protein family.</text>
</comment>
<proteinExistence type="evidence at protein level"/>
<gene>
    <name evidence="1" type="primary">N</name>
    <name type="ordered locus">Segment S</name>
</gene>
<sequence length="558" mass="62177">MSLSKEVKSFQWTQALRRELQSFTSDVKAAVIKDATNLLNGLDFSEVSNVQRIMRKEKRDDKDLQRLRSLNQTVHSLVDLKSTSKKNVLKVGRLSAEELMSLAADLEKLKAKIMRSERPQASGVYMGNLTTQQLDQRSQILQIVGMRKPQQGASGVVRVWDVKDSSLLNNQFGTMPSLTMACMAKQSQTPLNDVVQALTDLGLLYTVKYPNLNDLERLKDKHPVLGVITEQQSSINISGYNFSLGAAVKAGAALLDGGNMLESILIKPSNSEDLLKAVLGAKRKLNMFVSDQVGDRNPYENILYKVCLSGEGWPYIACRTSIVGRAWENTTIDLTSEKPAVNSPRPAPGAAGPPQVGLSYSQTMLLKDLMGGIDPNAPTWIDIEGRFNDPVEIAIFQPQNGQFIHFYREPVDQKQFKQDSKYSHGMDLADLFNAQPGLTSSVIGALPQGMVLSCQGSDDIRKLLDSQNRKDIKLIDVEMTREASREYEDKVWDKYGWLCKMHTGIVRDKKKKEITPHCALMDCIIFESASKARLPDLKTVHNILPHDLIFRGPNVVTL</sequence>
<evidence type="ECO:0000255" key="1">
    <source>
        <dbReference type="HAMAP-Rule" id="MF_04085"/>
    </source>
</evidence>
<evidence type="ECO:0000269" key="2">
    <source>
    </source>
</evidence>
<evidence type="ECO:0000269" key="3">
    <source>
    </source>
</evidence>
<evidence type="ECO:0000269" key="4">
    <source>
    </source>
</evidence>
<evidence type="ECO:0000269" key="5">
    <source>
    </source>
</evidence>
<evidence type="ECO:0000269" key="6">
    <source>
    </source>
</evidence>
<evidence type="ECO:0000269" key="7">
    <source>
    </source>
</evidence>
<evidence type="ECO:0007829" key="8">
    <source>
        <dbReference type="PDB" id="4O6H"/>
    </source>
</evidence>
<evidence type="ECO:0007829" key="9">
    <source>
        <dbReference type="PDB" id="4O6I"/>
    </source>
</evidence>
<name>NCAP_LYCVA</name>
<organismHost>
    <name type="scientific">Homo sapiens</name>
    <name type="common">Human</name>
    <dbReference type="NCBI Taxonomy" id="9606"/>
</organismHost>
<organismHost>
    <name type="scientific">Mesocricetus auratus</name>
    <name type="common">Golden hamster</name>
    <dbReference type="NCBI Taxonomy" id="10036"/>
</organismHost>
<organismHost>
    <name type="scientific">Mus musculus</name>
    <name type="common">Mouse</name>
    <dbReference type="NCBI Taxonomy" id="10090"/>
</organismHost>